<evidence type="ECO:0000255" key="1"/>
<evidence type="ECO:0000269" key="2">
    <source>
    </source>
</evidence>
<evidence type="ECO:0000305" key="3"/>
<organism>
    <name type="scientific">Caenorhabditis elegans</name>
    <dbReference type="NCBI Taxonomy" id="6239"/>
    <lineage>
        <taxon>Eukaryota</taxon>
        <taxon>Metazoa</taxon>
        <taxon>Ecdysozoa</taxon>
        <taxon>Nematoda</taxon>
        <taxon>Chromadorea</taxon>
        <taxon>Rhabditida</taxon>
        <taxon>Rhabditina</taxon>
        <taxon>Rhabditomorpha</taxon>
        <taxon>Rhabditoidea</taxon>
        <taxon>Rhabditidae</taxon>
        <taxon>Peloderinae</taxon>
        <taxon>Caenorhabditis</taxon>
    </lineage>
</organism>
<protein>
    <recommendedName>
        <fullName>Clc-like protein 2</fullName>
    </recommendedName>
</protein>
<proteinExistence type="evidence at transcript level"/>
<feature type="chain" id="PRO_0000089852" description="Clc-like protein 2">
    <location>
        <begin position="1"/>
        <end position="252"/>
    </location>
</feature>
<feature type="transmembrane region" description="Helical" evidence="1">
    <location>
        <begin position="7"/>
        <end position="29"/>
    </location>
</feature>
<feature type="transmembrane region" description="Helical" evidence="1">
    <location>
        <begin position="91"/>
        <end position="111"/>
    </location>
</feature>
<feature type="transmembrane region" description="Helical" evidence="1">
    <location>
        <begin position="127"/>
        <end position="147"/>
    </location>
</feature>
<feature type="transmembrane region" description="Helical" evidence="1">
    <location>
        <begin position="173"/>
        <end position="193"/>
    </location>
</feature>
<reference key="1">
    <citation type="journal article" date="1999" name="Gene">
        <title>Identification and characterization of a new member of the gas3/PMP22 gene family in C. elegans.</title>
        <authorList>
            <person name="Agostoni E."/>
            <person name="Gobessi S."/>
            <person name="Brancolini C."/>
            <person name="Schneider C."/>
        </authorList>
    </citation>
    <scope>NUCLEOTIDE SEQUENCE [MRNA]</scope>
    <scope>DEVELOPMENTAL STAGE</scope>
    <source>
        <strain>Bristol N2</strain>
    </source>
</reference>
<reference key="2">
    <citation type="journal article" date="1998" name="Science">
        <title>Genome sequence of the nematode C. elegans: a platform for investigating biology.</title>
        <authorList>
            <consortium name="The C. elegans sequencing consortium"/>
        </authorList>
    </citation>
    <scope>NUCLEOTIDE SEQUENCE [LARGE SCALE GENOMIC DNA]</scope>
    <source>
        <strain>Bristol N2</strain>
    </source>
</reference>
<keyword id="KW-0472">Membrane</keyword>
<keyword id="KW-1185">Reference proteome</keyword>
<keyword id="KW-0812">Transmembrane</keyword>
<keyword id="KW-1133">Transmembrane helix</keyword>
<dbReference type="EMBL" id="AF252604">
    <property type="protein sequence ID" value="AAF67350.1"/>
    <property type="molecule type" value="mRNA"/>
</dbReference>
<dbReference type="EMBL" id="FO080255">
    <property type="protein sequence ID" value="CCD62382.1"/>
    <property type="molecule type" value="Genomic_DNA"/>
</dbReference>
<dbReference type="RefSeq" id="NP_509257.1">
    <property type="nucleotide sequence ID" value="NM_076856.7"/>
</dbReference>
<dbReference type="FunCoup" id="Q11085">
    <property type="interactions" value="11"/>
</dbReference>
<dbReference type="STRING" id="6239.C01C10.1.1"/>
<dbReference type="TCDB" id="1.H.2.2.3">
    <property type="family name" value="the invertebrate pmp22-claudin (claudin2) family"/>
</dbReference>
<dbReference type="PaxDb" id="6239-C01C10.1"/>
<dbReference type="EnsemblMetazoa" id="C01C10.1a.1">
    <property type="protein sequence ID" value="C01C10.1a.1"/>
    <property type="gene ID" value="WBGene00000523"/>
</dbReference>
<dbReference type="GeneID" id="180999"/>
<dbReference type="KEGG" id="cel:CELE_C01C10.1"/>
<dbReference type="UCSC" id="C01C10.1">
    <property type="organism name" value="c. elegans"/>
</dbReference>
<dbReference type="AGR" id="WB:WBGene00000523"/>
<dbReference type="CTD" id="180999"/>
<dbReference type="WormBase" id="C01C10.1a">
    <property type="protein sequence ID" value="CE28881"/>
    <property type="gene ID" value="WBGene00000523"/>
    <property type="gene designation" value="clc-2"/>
</dbReference>
<dbReference type="eggNOG" id="ENOG502S5JX">
    <property type="taxonomic scope" value="Eukaryota"/>
</dbReference>
<dbReference type="HOGENOM" id="CLU_1112369_0_0_1"/>
<dbReference type="InParanoid" id="Q11085"/>
<dbReference type="OMA" id="PAWQVVY"/>
<dbReference type="OrthoDB" id="10025519at2759"/>
<dbReference type="PhylomeDB" id="Q11085"/>
<dbReference type="PRO" id="PR:Q11085"/>
<dbReference type="Proteomes" id="UP000001940">
    <property type="component" value="Chromosome X"/>
</dbReference>
<dbReference type="Bgee" id="WBGene00000523">
    <property type="expression patterns" value="Expressed in embryo and 3 other cell types or tissues"/>
</dbReference>
<dbReference type="ExpressionAtlas" id="Q11085">
    <property type="expression patterns" value="baseline and differential"/>
</dbReference>
<dbReference type="GO" id="GO:0016020">
    <property type="term" value="C:membrane"/>
    <property type="evidence" value="ECO:0000303"/>
    <property type="project" value="UniProtKB"/>
</dbReference>
<dbReference type="GO" id="GO:0005886">
    <property type="term" value="C:plasma membrane"/>
    <property type="evidence" value="ECO:0000314"/>
    <property type="project" value="WormBase"/>
</dbReference>
<dbReference type="GO" id="GO:0090136">
    <property type="term" value="P:epithelial cell-cell adhesion"/>
    <property type="evidence" value="ECO:0000315"/>
    <property type="project" value="WormBase"/>
</dbReference>
<dbReference type="FunFam" id="1.20.140.150:FF:000042">
    <property type="entry name" value="Clc-like protein 2"/>
    <property type="match status" value="1"/>
</dbReference>
<dbReference type="Gene3D" id="1.20.140.150">
    <property type="match status" value="1"/>
</dbReference>
<dbReference type="InterPro" id="IPR017974">
    <property type="entry name" value="Claudin_CS"/>
</dbReference>
<dbReference type="InterPro" id="IPR010761">
    <property type="entry name" value="Clc_prot-like"/>
</dbReference>
<dbReference type="InterPro" id="IPR050579">
    <property type="entry name" value="PMP-22/EMP/MP20-like"/>
</dbReference>
<dbReference type="PANTHER" id="PTHR10671:SF54">
    <property type="entry name" value="CLC-LIKE PROTEIN 2"/>
    <property type="match status" value="1"/>
</dbReference>
<dbReference type="PANTHER" id="PTHR10671">
    <property type="entry name" value="EPITHELIAL MEMBRANE PROTEIN-RELATED"/>
    <property type="match status" value="1"/>
</dbReference>
<dbReference type="Pfam" id="PF07062">
    <property type="entry name" value="Clc-like"/>
    <property type="match status" value="1"/>
</dbReference>
<gene>
    <name type="primary">clc-2</name>
    <name type="synonym">clc-4</name>
    <name type="ORF">C01C10.1</name>
</gene>
<comment type="subcellular location">
    <subcellularLocation>
        <location evidence="3">Membrane</location>
        <topology evidence="3">Multi-pass membrane protein</topology>
    </subcellularLocation>
</comment>
<comment type="developmental stage">
    <text evidence="2">Expressed throughout development.</text>
</comment>
<comment type="similarity">
    <text evidence="3">Belongs to the Clc family.</text>
</comment>
<sequence>MSQAVSYAILVLTIIAFLLTAAALCTPAWQVVYAREIRQWVQSGLWLSCQTRPNGMYSCTYTFSHDDFNTYFSDEVSGFRTPSFYPWQRTLFHIYLISQAFAMLSLISFCVSVSHKESKMPNILRSVFLVLAAVIAFGCLIAFAVYSYMVEYRFFHVSVSGIYEKHRGYSWYIALTGAFVYLVAIILSVVHVLLQARNSNTTMSRQNINSSLQSDFFEYQYHPNRSMESFEDRFAMRTLPPVPRQEKKTTVF</sequence>
<accession>Q11085</accession>
<accession>Q9NGJ8</accession>
<name>CLC2_CAEEL</name>